<keyword id="KW-0963">Cytoplasm</keyword>
<keyword id="KW-0290">Folate-binding</keyword>
<keyword id="KW-0819">tRNA processing</keyword>
<dbReference type="EMBL" id="CP000886">
    <property type="protein sequence ID" value="ABX69128.1"/>
    <property type="molecule type" value="Genomic_DNA"/>
</dbReference>
<dbReference type="RefSeq" id="WP_000874176.1">
    <property type="nucleotide sequence ID" value="NC_010102.1"/>
</dbReference>
<dbReference type="SMR" id="A9N3M5"/>
<dbReference type="KEGG" id="spq:SPAB_03796"/>
<dbReference type="PATRIC" id="fig|1016998.12.peg.3577"/>
<dbReference type="HOGENOM" id="CLU_007884_6_1_6"/>
<dbReference type="BioCyc" id="SENT1016998:SPAB_RS15450-MONOMER"/>
<dbReference type="Proteomes" id="UP000008556">
    <property type="component" value="Chromosome"/>
</dbReference>
<dbReference type="GO" id="GO:0005737">
    <property type="term" value="C:cytoplasm"/>
    <property type="evidence" value="ECO:0007669"/>
    <property type="project" value="UniProtKB-SubCell"/>
</dbReference>
<dbReference type="GO" id="GO:0005542">
    <property type="term" value="F:folic acid binding"/>
    <property type="evidence" value="ECO:0007669"/>
    <property type="project" value="UniProtKB-UniRule"/>
</dbReference>
<dbReference type="GO" id="GO:0016226">
    <property type="term" value="P:iron-sulfur cluster assembly"/>
    <property type="evidence" value="ECO:0007669"/>
    <property type="project" value="TreeGrafter"/>
</dbReference>
<dbReference type="GO" id="GO:0009451">
    <property type="term" value="P:RNA modification"/>
    <property type="evidence" value="ECO:0007669"/>
    <property type="project" value="InterPro"/>
</dbReference>
<dbReference type="GO" id="GO:0008033">
    <property type="term" value="P:tRNA processing"/>
    <property type="evidence" value="ECO:0007669"/>
    <property type="project" value="UniProtKB-UniRule"/>
</dbReference>
<dbReference type="FunFam" id="2.40.30.160:FF:000001">
    <property type="entry name" value="tRNA-modifying protein YgfZ"/>
    <property type="match status" value="1"/>
</dbReference>
<dbReference type="FunFam" id="3.30.70.1400:FF:000002">
    <property type="entry name" value="tRNA-modifying protein YgfZ"/>
    <property type="match status" value="1"/>
</dbReference>
<dbReference type="FunFam" id="3.30.70.1630:FF:000001">
    <property type="entry name" value="tRNA-modifying protein YgfZ"/>
    <property type="match status" value="1"/>
</dbReference>
<dbReference type="Gene3D" id="2.40.30.160">
    <property type="match status" value="1"/>
</dbReference>
<dbReference type="Gene3D" id="3.30.70.1630">
    <property type="match status" value="1"/>
</dbReference>
<dbReference type="Gene3D" id="3.30.70.1400">
    <property type="entry name" value="Aminomethyltransferase beta-barrel domains"/>
    <property type="match status" value="1"/>
</dbReference>
<dbReference type="HAMAP" id="MF_01175">
    <property type="entry name" value="tRNA_modifying_YgfZ"/>
    <property type="match status" value="1"/>
</dbReference>
<dbReference type="InterPro" id="IPR006222">
    <property type="entry name" value="GCV_T_N"/>
</dbReference>
<dbReference type="InterPro" id="IPR029043">
    <property type="entry name" value="GcvT/YgfZ_C"/>
</dbReference>
<dbReference type="InterPro" id="IPR023758">
    <property type="entry name" value="tRNA-modifying_YgfZ"/>
</dbReference>
<dbReference type="InterPro" id="IPR045179">
    <property type="entry name" value="YgfZ/GcvT"/>
</dbReference>
<dbReference type="InterPro" id="IPR017703">
    <property type="entry name" value="YgfZ/GcvT_CS"/>
</dbReference>
<dbReference type="InterPro" id="IPR048451">
    <property type="entry name" value="YgfZ_barrel"/>
</dbReference>
<dbReference type="NCBIfam" id="NF007110">
    <property type="entry name" value="PRK09559.1"/>
    <property type="match status" value="1"/>
</dbReference>
<dbReference type="NCBIfam" id="TIGR03317">
    <property type="entry name" value="ygfZ_signature"/>
    <property type="match status" value="1"/>
</dbReference>
<dbReference type="PANTHER" id="PTHR22602">
    <property type="entry name" value="TRANSFERASE CAF17, MITOCHONDRIAL-RELATED"/>
    <property type="match status" value="1"/>
</dbReference>
<dbReference type="PANTHER" id="PTHR22602:SF0">
    <property type="entry name" value="TRANSFERASE CAF17, MITOCHONDRIAL-RELATED"/>
    <property type="match status" value="1"/>
</dbReference>
<dbReference type="Pfam" id="PF01571">
    <property type="entry name" value="GCV_T"/>
    <property type="match status" value="1"/>
</dbReference>
<dbReference type="Pfam" id="PF21130">
    <property type="entry name" value="YgfZ_barrel"/>
    <property type="match status" value="1"/>
</dbReference>
<dbReference type="SUPFAM" id="SSF101790">
    <property type="entry name" value="Aminomethyltransferase beta-barrel domain"/>
    <property type="match status" value="1"/>
</dbReference>
<dbReference type="SUPFAM" id="SSF103025">
    <property type="entry name" value="Folate-binding domain"/>
    <property type="match status" value="1"/>
</dbReference>
<evidence type="ECO:0000255" key="1">
    <source>
        <dbReference type="HAMAP-Rule" id="MF_01175"/>
    </source>
</evidence>
<protein>
    <recommendedName>
        <fullName evidence="1">tRNA-modifying protein YgfZ</fullName>
    </recommendedName>
</protein>
<comment type="function">
    <text evidence="1">Folate-binding protein involved in regulating the level of ATP-DnaA and in the modification of some tRNAs. It is probably a key factor in regulatory networks that act via tRNA modification, such as initiation of chromosomal replication.</text>
</comment>
<comment type="subcellular location">
    <subcellularLocation>
        <location evidence="1">Cytoplasm</location>
    </subcellularLocation>
</comment>
<comment type="similarity">
    <text evidence="1">Belongs to the tRNA-modifying YgfZ family.</text>
</comment>
<gene>
    <name evidence="1" type="primary">ygfZ</name>
    <name type="ordered locus">SPAB_03796</name>
</gene>
<sequence>MAFISFPPRHPSSSARLPLTLIALDDWALSTITGVDSEKYIQGQVTADVSQMTEQQHLLAAHCDAKGKMWSTLRLFRERDGFAWIERRSVREAQLTELKKYAVFSKVVIAPDDERVLLGVAGFQARAALANVFSELPNSENQVVRDGASTLLWFEHPAERFLLVTDVATANMLTEKLHGEAELNNSQQWLALDIEAGIPVIDAANSGQFIPQATNLQALGGISFKKGCYTGQEMVARAKFRGANKRALWLLAGKASRVPEAGEDLELQMGENWRRTGAILAATQLDDGQLLVQAVMNNDLEAESVFRVRDDANTLHIVPLPYSLEE</sequence>
<accession>A9N3M5</accession>
<reference key="1">
    <citation type="submission" date="2007-11" db="EMBL/GenBank/DDBJ databases">
        <authorList>
            <consortium name="The Salmonella enterica serovar Paratyphi B Genome Sequencing Project"/>
            <person name="McClelland M."/>
            <person name="Sanderson E.K."/>
            <person name="Porwollik S."/>
            <person name="Spieth J."/>
            <person name="Clifton W.S."/>
            <person name="Fulton R."/>
            <person name="Cordes M."/>
            <person name="Wollam A."/>
            <person name="Shah N."/>
            <person name="Pepin K."/>
            <person name="Bhonagiri V."/>
            <person name="Nash W."/>
            <person name="Johnson M."/>
            <person name="Thiruvilangam P."/>
            <person name="Wilson R."/>
        </authorList>
    </citation>
    <scope>NUCLEOTIDE SEQUENCE [LARGE SCALE GENOMIC DNA]</scope>
    <source>
        <strain>ATCC BAA-1250 / SPB7</strain>
    </source>
</reference>
<feature type="chain" id="PRO_1000085413" description="tRNA-modifying protein YgfZ">
    <location>
        <begin position="1"/>
        <end position="326"/>
    </location>
</feature>
<feature type="binding site" evidence="1">
    <location>
        <position position="27"/>
    </location>
    <ligand>
        <name>folate</name>
        <dbReference type="ChEBI" id="CHEBI:62501"/>
    </ligand>
</feature>
<feature type="binding site" evidence="1">
    <location>
        <position position="189"/>
    </location>
    <ligand>
        <name>folate</name>
        <dbReference type="ChEBI" id="CHEBI:62501"/>
    </ligand>
</feature>
<organism>
    <name type="scientific">Salmonella paratyphi B (strain ATCC BAA-1250 / SPB7)</name>
    <dbReference type="NCBI Taxonomy" id="1016998"/>
    <lineage>
        <taxon>Bacteria</taxon>
        <taxon>Pseudomonadati</taxon>
        <taxon>Pseudomonadota</taxon>
        <taxon>Gammaproteobacteria</taxon>
        <taxon>Enterobacterales</taxon>
        <taxon>Enterobacteriaceae</taxon>
        <taxon>Salmonella</taxon>
    </lineage>
</organism>
<proteinExistence type="inferred from homology"/>
<name>YGFZ_SALPB</name>